<proteinExistence type="evidence at protein level"/>
<organism>
    <name type="scientific">Thermotoga maritima (strain ATCC 43589 / DSM 3109 / JCM 10099 / NBRC 100826 / MSB8)</name>
    <dbReference type="NCBI Taxonomy" id="243274"/>
    <lineage>
        <taxon>Bacteria</taxon>
        <taxon>Thermotogati</taxon>
        <taxon>Thermotogota</taxon>
        <taxon>Thermotogae</taxon>
        <taxon>Thermotogales</taxon>
        <taxon>Thermotogaceae</taxon>
        <taxon>Thermotoga</taxon>
    </lineage>
</organism>
<evidence type="ECO:0000250" key="1">
    <source>
        <dbReference type="UniProtKB" id="P82610"/>
    </source>
</evidence>
<evidence type="ECO:0000255" key="2">
    <source>
        <dbReference type="HAMAP-Rule" id="MF_00172"/>
    </source>
</evidence>
<evidence type="ECO:0000269" key="3">
    <source>
    </source>
</evidence>
<evidence type="ECO:0000269" key="4">
    <source>
    </source>
</evidence>
<evidence type="ECO:0000303" key="5">
    <source>
    </source>
</evidence>
<evidence type="ECO:0000303" key="6">
    <source>
    </source>
</evidence>
<evidence type="ECO:0000305" key="7"/>
<evidence type="ECO:0007744" key="8">
    <source>
        <dbReference type="PDB" id="1T7L"/>
    </source>
</evidence>
<evidence type="ECO:0007744" key="9">
    <source>
        <dbReference type="PDB" id="1XDJ"/>
    </source>
</evidence>
<evidence type="ECO:0007744" key="10">
    <source>
        <dbReference type="PDB" id="1XPG"/>
    </source>
</evidence>
<evidence type="ECO:0007744" key="11">
    <source>
        <dbReference type="PDB" id="1XR2"/>
    </source>
</evidence>
<evidence type="ECO:0007744" key="12">
    <source>
        <dbReference type="PDB" id="3BQ5"/>
    </source>
</evidence>
<evidence type="ECO:0007744" key="13">
    <source>
        <dbReference type="PDB" id="3BQ6"/>
    </source>
</evidence>
<evidence type="ECO:0007829" key="14">
    <source>
        <dbReference type="PDB" id="1T7L"/>
    </source>
</evidence>
<evidence type="ECO:0007829" key="15">
    <source>
        <dbReference type="PDB" id="1XPG"/>
    </source>
</evidence>
<evidence type="ECO:0007829" key="16">
    <source>
        <dbReference type="PDB" id="3BQ5"/>
    </source>
</evidence>
<reference key="1">
    <citation type="journal article" date="1999" name="Nature">
        <title>Evidence for lateral gene transfer between Archaea and Bacteria from genome sequence of Thermotoga maritima.</title>
        <authorList>
            <person name="Nelson K.E."/>
            <person name="Clayton R.A."/>
            <person name="Gill S.R."/>
            <person name="Gwinn M.L."/>
            <person name="Dodson R.J."/>
            <person name="Haft D.H."/>
            <person name="Hickey E.K."/>
            <person name="Peterson J.D."/>
            <person name="Nelson W.C."/>
            <person name="Ketchum K.A."/>
            <person name="McDonald L.A."/>
            <person name="Utterback T.R."/>
            <person name="Malek J.A."/>
            <person name="Linher K.D."/>
            <person name="Garrett M.M."/>
            <person name="Stewart A.M."/>
            <person name="Cotton M.D."/>
            <person name="Pratt M.S."/>
            <person name="Phillips C.A."/>
            <person name="Richardson D.L."/>
            <person name="Heidelberg J.F."/>
            <person name="Sutton G.G."/>
            <person name="Fleischmann R.D."/>
            <person name="Eisen J.A."/>
            <person name="White O."/>
            <person name="Salzberg S.L."/>
            <person name="Smith H.O."/>
            <person name="Venter J.C."/>
            <person name="Fraser C.M."/>
        </authorList>
    </citation>
    <scope>NUCLEOTIDE SEQUENCE [LARGE SCALE GENOMIC DNA]</scope>
    <source>
        <strain>ATCC 43589 / DSM 3109 / JCM 10099 / NBRC 100826 / MSB8</strain>
    </source>
</reference>
<reference evidence="8 9 10 11" key="2">
    <citation type="journal article" date="2005" name="PLoS Biol.">
        <title>Cobalamin-independent methionine synthase (MetE): a face-to-face double barrel that evolved by gene duplication.</title>
        <authorList>
            <person name="Pejchal R."/>
            <person name="Ludwig M.L."/>
        </authorList>
    </citation>
    <scope>X-RAY CRYSTALLOGRAPHY (2.00 ANGSTROMS) OF 2-734 AND IN COMPLEXES WITH 5-METHYLTETRAHYDROFOLATE; L-HOMOCYSTEINE AND ZINC</scope>
    <scope>COFACTOR</scope>
</reference>
<reference evidence="12 13" key="3">
    <citation type="journal article" date="2008" name="Proc. Natl. Acad. Sci. U.S.A.">
        <title>Metal active site elasticity linked to activation of homocysteine in methionine synthases.</title>
        <authorList>
            <person name="Koutmos M."/>
            <person name="Pejchal R."/>
            <person name="Bomer T.M."/>
            <person name="Matthews R.G."/>
            <person name="Smith J.L."/>
            <person name="Ludwig M.L."/>
        </authorList>
    </citation>
    <scope>X-RAY CRYSTALLOGRAPHY (2.00 ANGSTROMS) OF 2-734 IN COMPLEXES WITH L-HOMOCYSTEINE AND ZINC</scope>
    <scope>COFACTOR</scope>
    <scope>REACTION MECHANISM</scope>
</reference>
<accession>Q9X112</accession>
<name>METE_THEMA</name>
<feature type="chain" id="PRO_0000098674" description="5-methyltetrahydropteroyltriglutamate--homocysteine methyltransferase">
    <location>
        <begin position="1"/>
        <end position="734"/>
    </location>
</feature>
<feature type="active site" description="Proton donor" evidence="1">
    <location>
        <position position="672"/>
    </location>
</feature>
<feature type="binding site" evidence="3 10 11">
    <location>
        <begin position="15"/>
        <end position="18"/>
    </location>
    <ligand>
        <name>5-methyltetrahydropteroyltri-L-glutamate</name>
        <dbReference type="ChEBI" id="CHEBI:58207"/>
    </ligand>
</feature>
<feature type="binding site" evidence="3 10 11">
    <location>
        <position position="104"/>
    </location>
    <ligand>
        <name>5-methyltetrahydropteroyltri-L-glutamate</name>
        <dbReference type="ChEBI" id="CHEBI:58207"/>
    </ligand>
</feature>
<feature type="binding site" evidence="3 4 9 13">
    <location>
        <begin position="409"/>
        <end position="411"/>
    </location>
    <ligand>
        <name>L-homocysteine</name>
        <dbReference type="ChEBI" id="CHEBI:58199"/>
    </ligand>
</feature>
<feature type="binding site" evidence="1">
    <location>
        <begin position="409"/>
        <end position="411"/>
    </location>
    <ligand>
        <name>L-methionine</name>
        <dbReference type="ChEBI" id="CHEBI:57844"/>
    </ligand>
</feature>
<feature type="binding site" evidence="3 4 9 13">
    <location>
        <position position="462"/>
    </location>
    <ligand>
        <name>L-homocysteine</name>
        <dbReference type="ChEBI" id="CHEBI:58199"/>
    </ligand>
</feature>
<feature type="binding site" evidence="1">
    <location>
        <position position="462"/>
    </location>
    <ligand>
        <name>L-methionine</name>
        <dbReference type="ChEBI" id="CHEBI:57844"/>
    </ligand>
</feature>
<feature type="binding site" evidence="3 11">
    <location>
        <begin position="493"/>
        <end position="494"/>
    </location>
    <ligand>
        <name>5-methyltetrahydropteroyltri-L-glutamate</name>
        <dbReference type="ChEBI" id="CHEBI:58207"/>
    </ligand>
</feature>
<feature type="binding site" evidence="3 10 11">
    <location>
        <position position="539"/>
    </location>
    <ligand>
        <name>5-methyltetrahydropteroyltri-L-glutamate</name>
        <dbReference type="ChEBI" id="CHEBI:58207"/>
    </ligand>
</feature>
<feature type="binding site" evidence="3 4 9 13">
    <location>
        <position position="577"/>
    </location>
    <ligand>
        <name>L-homocysteine</name>
        <dbReference type="ChEBI" id="CHEBI:58199"/>
    </ligand>
</feature>
<feature type="binding site" evidence="1">
    <location>
        <position position="577"/>
    </location>
    <ligand>
        <name>L-methionine</name>
        <dbReference type="ChEBI" id="CHEBI:57844"/>
    </ligand>
</feature>
<feature type="binding site" evidence="3 10 11">
    <location>
        <position position="583"/>
    </location>
    <ligand>
        <name>5-methyltetrahydropteroyltri-L-glutamate</name>
        <dbReference type="ChEBI" id="CHEBI:58207"/>
    </ligand>
</feature>
<feature type="binding site" evidence="3 4 9 10 12 13">
    <location>
        <position position="618"/>
    </location>
    <ligand>
        <name>Zn(2+)</name>
        <dbReference type="ChEBI" id="CHEBI:29105"/>
        <note>catalytic</note>
    </ligand>
</feature>
<feature type="binding site" evidence="3 4 9 10 12 13">
    <location>
        <position position="620"/>
    </location>
    <ligand>
        <name>Zn(2+)</name>
        <dbReference type="ChEBI" id="CHEBI:29105"/>
        <note>catalytic</note>
    </ligand>
</feature>
<feature type="binding site" evidence="3 4 9 10 13">
    <location>
        <position position="642"/>
    </location>
    <ligand>
        <name>Zn(2+)</name>
        <dbReference type="ChEBI" id="CHEBI:29105"/>
        <note>catalytic</note>
    </ligand>
</feature>
<feature type="binding site" evidence="3 4 9 10 12 13">
    <location>
        <position position="704"/>
    </location>
    <ligand>
        <name>Zn(2+)</name>
        <dbReference type="ChEBI" id="CHEBI:29105"/>
        <note>catalytic</note>
    </ligand>
</feature>
<feature type="strand" evidence="16">
    <location>
        <begin position="2"/>
        <end position="4"/>
    </location>
</feature>
<feature type="helix" evidence="14">
    <location>
        <begin position="16"/>
        <end position="25"/>
    </location>
</feature>
<feature type="helix" evidence="14">
    <location>
        <begin position="31"/>
        <end position="52"/>
    </location>
</feature>
<feature type="strand" evidence="14">
    <location>
        <begin position="57"/>
        <end position="59"/>
    </location>
</feature>
<feature type="helix" evidence="14">
    <location>
        <begin position="66"/>
        <end position="73"/>
    </location>
</feature>
<feature type="helix" evidence="14">
    <location>
        <begin position="79"/>
        <end position="81"/>
    </location>
</feature>
<feature type="helix" evidence="14">
    <location>
        <begin position="87"/>
        <end position="94"/>
    </location>
</feature>
<feature type="strand" evidence="14">
    <location>
        <begin position="101"/>
        <end position="104"/>
    </location>
</feature>
<feature type="strand" evidence="14">
    <location>
        <begin position="111"/>
        <end position="114"/>
    </location>
</feature>
<feature type="helix" evidence="14">
    <location>
        <begin position="128"/>
        <end position="137"/>
    </location>
</feature>
<feature type="turn" evidence="14">
    <location>
        <begin position="138"/>
        <end position="140"/>
    </location>
</feature>
<feature type="strand" evidence="14">
    <location>
        <begin position="144"/>
        <end position="148"/>
    </location>
</feature>
<feature type="helix" evidence="14">
    <location>
        <begin position="150"/>
        <end position="155"/>
    </location>
</feature>
<feature type="helix" evidence="14">
    <location>
        <begin position="167"/>
        <end position="190"/>
    </location>
</feature>
<feature type="strand" evidence="14">
    <location>
        <begin position="196"/>
        <end position="199"/>
    </location>
</feature>
<feature type="helix" evidence="14">
    <location>
        <begin position="201"/>
        <end position="204"/>
    </location>
</feature>
<feature type="helix" evidence="14">
    <location>
        <begin position="209"/>
        <end position="220"/>
    </location>
</feature>
<feature type="turn" evidence="14">
    <location>
        <begin position="221"/>
        <end position="224"/>
    </location>
</feature>
<feature type="strand" evidence="14">
    <location>
        <begin position="227"/>
        <end position="230"/>
    </location>
</feature>
<feature type="helix" evidence="14">
    <location>
        <begin position="239"/>
        <end position="243"/>
    </location>
</feature>
<feature type="strand" evidence="14">
    <location>
        <begin position="248"/>
        <end position="253"/>
    </location>
</feature>
<feature type="helix" evidence="14">
    <location>
        <begin position="259"/>
        <end position="267"/>
    </location>
</feature>
<feature type="strand" evidence="14">
    <location>
        <begin position="273"/>
        <end position="280"/>
    </location>
</feature>
<feature type="helix" evidence="14">
    <location>
        <begin position="290"/>
        <end position="300"/>
    </location>
</feature>
<feature type="strand" evidence="14">
    <location>
        <begin position="303"/>
        <end position="309"/>
    </location>
</feature>
<feature type="helix" evidence="14">
    <location>
        <begin position="311"/>
        <end position="313"/>
    </location>
</feature>
<feature type="strand" evidence="14">
    <location>
        <begin position="323"/>
        <end position="325"/>
    </location>
</feature>
<feature type="turn" evidence="14">
    <location>
        <begin position="326"/>
        <end position="328"/>
    </location>
</feature>
<feature type="helix" evidence="14">
    <location>
        <begin position="329"/>
        <end position="331"/>
    </location>
</feature>
<feature type="helix" evidence="14">
    <location>
        <begin position="335"/>
        <end position="349"/>
    </location>
</feature>
<feature type="turn" evidence="14">
    <location>
        <begin position="362"/>
        <end position="365"/>
    </location>
</feature>
<feature type="helix" evidence="14">
    <location>
        <begin position="368"/>
        <end position="375"/>
    </location>
</feature>
<feature type="helix" evidence="14">
    <location>
        <begin position="379"/>
        <end position="381"/>
    </location>
</feature>
<feature type="helix" evidence="14">
    <location>
        <begin position="388"/>
        <end position="399"/>
    </location>
</feature>
<feature type="helix" evidence="14">
    <location>
        <begin position="416"/>
        <end position="426"/>
    </location>
</feature>
<feature type="helix" evidence="14">
    <location>
        <begin position="432"/>
        <end position="453"/>
    </location>
</feature>
<feature type="strand" evidence="14">
    <location>
        <begin position="456"/>
        <end position="458"/>
    </location>
</feature>
<feature type="helix" evidence="14">
    <location>
        <begin position="468"/>
        <end position="473"/>
    </location>
</feature>
<feature type="strand" evidence="14">
    <location>
        <begin position="476"/>
        <end position="480"/>
    </location>
</feature>
<feature type="strand" evidence="14">
    <location>
        <begin position="487"/>
        <end position="490"/>
    </location>
</feature>
<feature type="strand" evidence="14">
    <location>
        <begin position="493"/>
        <end position="495"/>
    </location>
</feature>
<feature type="strand" evidence="14">
    <location>
        <begin position="499"/>
        <end position="505"/>
    </location>
</feature>
<feature type="helix" evidence="14">
    <location>
        <begin position="512"/>
        <end position="520"/>
    </location>
</feature>
<feature type="strand" evidence="14">
    <location>
        <begin position="526"/>
        <end position="531"/>
    </location>
</feature>
<feature type="helix" evidence="14">
    <location>
        <begin position="533"/>
        <end position="538"/>
    </location>
</feature>
<feature type="strand" evidence="14">
    <location>
        <begin position="540"/>
        <end position="542"/>
    </location>
</feature>
<feature type="strand" evidence="14">
    <location>
        <begin position="544"/>
        <end position="546"/>
    </location>
</feature>
<feature type="helix" evidence="14">
    <location>
        <begin position="548"/>
        <end position="568"/>
    </location>
</feature>
<feature type="strand" evidence="14">
    <location>
        <begin position="573"/>
        <end position="577"/>
    </location>
</feature>
<feature type="helix" evidence="14">
    <location>
        <begin position="580"/>
        <end position="583"/>
    </location>
</feature>
<feature type="helix" evidence="14">
    <location>
        <begin position="589"/>
        <end position="591"/>
    </location>
</feature>
<feature type="helix" evidence="14">
    <location>
        <begin position="592"/>
        <end position="606"/>
    </location>
</feature>
<feature type="strand" evidence="14">
    <location>
        <begin position="613"/>
        <end position="618"/>
    </location>
</feature>
<feature type="turn" evidence="14">
    <location>
        <begin position="625"/>
        <end position="627"/>
    </location>
</feature>
<feature type="helix" evidence="14">
    <location>
        <begin position="628"/>
        <end position="631"/>
    </location>
</feature>
<feature type="strand" evidence="14">
    <location>
        <begin position="637"/>
        <end position="642"/>
    </location>
</feature>
<feature type="turn" evidence="14">
    <location>
        <begin position="644"/>
        <end position="648"/>
    </location>
</feature>
<feature type="helix" evidence="14">
    <location>
        <begin position="649"/>
        <end position="651"/>
    </location>
</feature>
<feature type="helix" evidence="14">
    <location>
        <begin position="652"/>
        <end position="655"/>
    </location>
</feature>
<feature type="strand" evidence="14">
    <location>
        <begin position="662"/>
        <end position="667"/>
    </location>
</feature>
<feature type="strand" evidence="15">
    <location>
        <begin position="673"/>
        <end position="675"/>
    </location>
</feature>
<feature type="helix" evidence="14">
    <location>
        <begin position="679"/>
        <end position="689"/>
    </location>
</feature>
<feature type="turn" evidence="14">
    <location>
        <begin position="690"/>
        <end position="692"/>
    </location>
</feature>
<feature type="helix" evidence="14">
    <location>
        <begin position="695"/>
        <end position="697"/>
    </location>
</feature>
<feature type="strand" evidence="14">
    <location>
        <begin position="698"/>
        <end position="701"/>
    </location>
</feature>
<feature type="helix" evidence="14">
    <location>
        <begin position="711"/>
        <end position="731"/>
    </location>
</feature>
<keyword id="KW-0002">3D-structure</keyword>
<keyword id="KW-0028">Amino-acid biosynthesis</keyword>
<keyword id="KW-0479">Metal-binding</keyword>
<keyword id="KW-0486">Methionine biosynthesis</keyword>
<keyword id="KW-0489">Methyltransferase</keyword>
<keyword id="KW-1185">Reference proteome</keyword>
<keyword id="KW-0677">Repeat</keyword>
<keyword id="KW-0808">Transferase</keyword>
<keyword id="KW-0862">Zinc</keyword>
<sequence>MKAYAFGFPKIGEKREFKKALEDFWKGKITEEQFEEEMNKLRMYMVENYRKNVDVIPSNELSYYDFVLDTAVMVGAVPERFGEYRGLSTYFDMARGGKALEMTKFFNTNYHYLVPEIETEEFYLLENKPLEDYLFFKSKGIETAPWVIGPFTFLYLSKRNGEWIRRPNQMEKLLESLVSVYKEVFEKLVENGCKEILVNEPAFVCDLEKAHWDLILNVYRELSEFPLTVFTYYDSVSDYEACVSLPVKRLHFDFVSNEENLKNLEKHGFPEDKKLVAGVINGRQPWKVDLRKVASLVEKLGASAISNSCPLFHLPVTLELENNLPGGLKEKLAFAKEKLEELKMLKDFLEGKTFDLPNVSFEDFAVDLQAVERVRNLPEDSFRREKEYTERDRIQRERLNLPLFPTTTIGSFPQTPEVRKMRSKYRKGEISKEEYEAFIKEQIKKAIELQEEIGLDVLVHGEFERTDMVEFFAEKLNGIATTQNGWVLSYGSRCYRPPIIYGTVTRPEPMTLKEITYAQSLTEKPVKGMLTGPVTIMSWSYYREDIPEREIAYQIALAINEEVKDLEEAGIKIVQIDEPAFREKAPIKKSKWPEYFEWAINAFNLAANARPETQIHAHMCYSDFNEIIEYIHQLEFDVISIEASRSKGEIISAFENFKGWIKQIGVGVWDIHSPAVPSINEMREIVERVLRVLPKELIWINPDCGLKTRNWDEVIPSLRNMVALAKEMREKFES</sequence>
<dbReference type="EC" id="2.1.1.14" evidence="2"/>
<dbReference type="EMBL" id="AE000512">
    <property type="protein sequence ID" value="AAD36360.1"/>
    <property type="molecule type" value="Genomic_DNA"/>
</dbReference>
<dbReference type="PIR" id="E72271">
    <property type="entry name" value="E72271"/>
</dbReference>
<dbReference type="RefSeq" id="NP_229090.1">
    <property type="nucleotide sequence ID" value="NC_000853.1"/>
</dbReference>
<dbReference type="RefSeq" id="WP_004079949.1">
    <property type="nucleotide sequence ID" value="NZ_CP011107.1"/>
</dbReference>
<dbReference type="PDB" id="1T7L">
    <property type="method" value="X-ray"/>
    <property type="resolution" value="2.00 A"/>
    <property type="chains" value="A/B=2-734"/>
</dbReference>
<dbReference type="PDB" id="1XDJ">
    <property type="method" value="X-ray"/>
    <property type="resolution" value="2.20 A"/>
    <property type="chains" value="A/B=2-734"/>
</dbReference>
<dbReference type="PDB" id="1XPG">
    <property type="method" value="X-ray"/>
    <property type="resolution" value="2.59 A"/>
    <property type="chains" value="A/B=2-732"/>
</dbReference>
<dbReference type="PDB" id="1XR2">
    <property type="method" value="X-ray"/>
    <property type="resolution" value="2.35 A"/>
    <property type="chains" value="A/B=2-734"/>
</dbReference>
<dbReference type="PDB" id="3BQ5">
    <property type="method" value="X-ray"/>
    <property type="resolution" value="2.00 A"/>
    <property type="chains" value="A/B=2-734"/>
</dbReference>
<dbReference type="PDB" id="3BQ6">
    <property type="method" value="X-ray"/>
    <property type="resolution" value="2.10 A"/>
    <property type="chains" value="A/B=2-734"/>
</dbReference>
<dbReference type="PDBsum" id="1T7L"/>
<dbReference type="PDBsum" id="1XDJ"/>
<dbReference type="PDBsum" id="1XPG"/>
<dbReference type="PDBsum" id="1XR2"/>
<dbReference type="PDBsum" id="3BQ5"/>
<dbReference type="PDBsum" id="3BQ6"/>
<dbReference type="SMR" id="Q9X112"/>
<dbReference type="FunCoup" id="Q9X112">
    <property type="interactions" value="199"/>
</dbReference>
<dbReference type="STRING" id="243274.TM_1286"/>
<dbReference type="DrugBank" id="DB04481">
    <property type="generic name" value="Erythritol"/>
</dbReference>
<dbReference type="DrugBank" id="DB04422">
    <property type="generic name" value="Homocysteine"/>
</dbReference>
<dbReference type="PaxDb" id="243274-THEMA_07905"/>
<dbReference type="DNASU" id="898197"/>
<dbReference type="EnsemblBacteria" id="AAD36360">
    <property type="protein sequence ID" value="AAD36360"/>
    <property type="gene ID" value="TM_1286"/>
</dbReference>
<dbReference type="KEGG" id="tma:TM1286"/>
<dbReference type="KEGG" id="tmi:THEMA_07905"/>
<dbReference type="KEGG" id="tmm:Tmari_1293"/>
<dbReference type="KEGG" id="tmw:THMA_1312"/>
<dbReference type="eggNOG" id="COG0620">
    <property type="taxonomic scope" value="Bacteria"/>
</dbReference>
<dbReference type="InParanoid" id="Q9X112"/>
<dbReference type="OrthoDB" id="244285at2"/>
<dbReference type="BRENDA" id="2.1.1.14">
    <property type="organism ID" value="6331"/>
</dbReference>
<dbReference type="UniPathway" id="UPA00051">
    <property type="reaction ID" value="UER00082"/>
</dbReference>
<dbReference type="EvolutionaryTrace" id="Q9X112"/>
<dbReference type="Proteomes" id="UP000008183">
    <property type="component" value="Chromosome"/>
</dbReference>
<dbReference type="GO" id="GO:0003871">
    <property type="term" value="F:5-methyltetrahydropteroyltriglutamate-homocysteine S-methyltransferase activity"/>
    <property type="evidence" value="ECO:0000250"/>
    <property type="project" value="UniProtKB"/>
</dbReference>
<dbReference type="GO" id="GO:0008270">
    <property type="term" value="F:zinc ion binding"/>
    <property type="evidence" value="ECO:0000314"/>
    <property type="project" value="UniProtKB"/>
</dbReference>
<dbReference type="GO" id="GO:0071266">
    <property type="term" value="P:'de novo' L-methionine biosynthetic process"/>
    <property type="evidence" value="ECO:0000250"/>
    <property type="project" value="UniProtKB"/>
</dbReference>
<dbReference type="GO" id="GO:0032259">
    <property type="term" value="P:methylation"/>
    <property type="evidence" value="ECO:0007669"/>
    <property type="project" value="UniProtKB-KW"/>
</dbReference>
<dbReference type="CDD" id="cd03311">
    <property type="entry name" value="CIMS_C_terminal_like"/>
    <property type="match status" value="1"/>
</dbReference>
<dbReference type="CDD" id="cd03312">
    <property type="entry name" value="CIMS_N_terminal_like"/>
    <property type="match status" value="1"/>
</dbReference>
<dbReference type="Gene3D" id="3.20.20.210">
    <property type="match status" value="2"/>
</dbReference>
<dbReference type="HAMAP" id="MF_00172">
    <property type="entry name" value="Meth_synth"/>
    <property type="match status" value="1"/>
</dbReference>
<dbReference type="InterPro" id="IPR013215">
    <property type="entry name" value="Cbl-indep_Met_Synth_N"/>
</dbReference>
<dbReference type="InterPro" id="IPR006276">
    <property type="entry name" value="Cobalamin-indep_Met_synthase"/>
</dbReference>
<dbReference type="InterPro" id="IPR002629">
    <property type="entry name" value="Met_Synth_C/arc"/>
</dbReference>
<dbReference type="InterPro" id="IPR038071">
    <property type="entry name" value="UROD/MetE-like_sf"/>
</dbReference>
<dbReference type="NCBIfam" id="TIGR01371">
    <property type="entry name" value="met_syn_B12ind"/>
    <property type="match status" value="1"/>
</dbReference>
<dbReference type="NCBIfam" id="NF003556">
    <property type="entry name" value="PRK05222.1"/>
    <property type="match status" value="1"/>
</dbReference>
<dbReference type="PANTHER" id="PTHR30519">
    <property type="entry name" value="5-METHYLTETRAHYDROPTEROYLTRIGLUTAMATE--HOMOCYSTEINE METHYLTRANSFERASE"/>
    <property type="match status" value="1"/>
</dbReference>
<dbReference type="Pfam" id="PF08267">
    <property type="entry name" value="Meth_synt_1"/>
    <property type="match status" value="1"/>
</dbReference>
<dbReference type="Pfam" id="PF01717">
    <property type="entry name" value="Meth_synt_2"/>
    <property type="match status" value="1"/>
</dbReference>
<dbReference type="PIRSF" id="PIRSF000382">
    <property type="entry name" value="MeTrfase_B12_ind"/>
    <property type="match status" value="1"/>
</dbReference>
<dbReference type="SUPFAM" id="SSF51726">
    <property type="entry name" value="UROD/MetE-like"/>
    <property type="match status" value="2"/>
</dbReference>
<gene>
    <name evidence="2 5 6" type="primary">metE</name>
    <name type="ordered locus">TM_1286</name>
</gene>
<protein>
    <recommendedName>
        <fullName evidence="2">5-methyltetrahydropteroyltriglutamate--homocysteine methyltransferase</fullName>
        <ecNumber evidence="2">2.1.1.14</ecNumber>
    </recommendedName>
    <alternativeName>
        <fullName evidence="2 5 6">Cobalamin-independent methionine synthase</fullName>
    </alternativeName>
    <alternativeName>
        <fullName evidence="2">Methionine synthase, vitamin-B12 independent isozyme</fullName>
    </alternativeName>
</protein>
<comment type="function">
    <text evidence="2">Catalyzes the transfer of a methyl group from 5-methyltetrahydrofolate to homocysteine resulting in methionine formation.</text>
</comment>
<comment type="catalytic activity">
    <reaction evidence="2">
        <text>5-methyltetrahydropteroyltri-L-glutamate + L-homocysteine = tetrahydropteroyltri-L-glutamate + L-methionine</text>
        <dbReference type="Rhea" id="RHEA:21196"/>
        <dbReference type="ChEBI" id="CHEBI:57844"/>
        <dbReference type="ChEBI" id="CHEBI:58140"/>
        <dbReference type="ChEBI" id="CHEBI:58199"/>
        <dbReference type="ChEBI" id="CHEBI:58207"/>
        <dbReference type="EC" id="2.1.1.14"/>
    </reaction>
</comment>
<comment type="cofactor">
    <cofactor evidence="2 3 4">
        <name>Zn(2+)</name>
        <dbReference type="ChEBI" id="CHEBI:29105"/>
    </cofactor>
    <text evidence="2 3 4">Binds 1 zinc ion per subunit.</text>
</comment>
<comment type="pathway">
    <text evidence="2">Amino-acid biosynthesis; L-methionine biosynthesis via de novo pathway; L-methionine from L-homocysteine (MetE route): step 1/1.</text>
</comment>
<comment type="similarity">
    <text evidence="2 7">Belongs to the vitamin-B12 independent methionine synthase family.</text>
</comment>